<name>YBJQ_ECOSE</name>
<reference key="1">
    <citation type="journal article" date="2008" name="DNA Res.">
        <title>Complete genome sequence and comparative analysis of the wild-type commensal Escherichia coli strain SE11 isolated from a healthy adult.</title>
        <authorList>
            <person name="Oshima K."/>
            <person name="Toh H."/>
            <person name="Ogura Y."/>
            <person name="Sasamoto H."/>
            <person name="Morita H."/>
            <person name="Park S.-H."/>
            <person name="Ooka T."/>
            <person name="Iyoda S."/>
            <person name="Taylor T.D."/>
            <person name="Hayashi T."/>
            <person name="Itoh K."/>
            <person name="Hattori M."/>
        </authorList>
    </citation>
    <scope>NUCLEOTIDE SEQUENCE [LARGE SCALE GENOMIC DNA]</scope>
    <source>
        <strain>SE11</strain>
    </source>
</reference>
<accession>B6I8I6</accession>
<feature type="chain" id="PRO_1000119995" description="UPF0145 protein YbjQ">
    <location>
        <begin position="1"/>
        <end position="107"/>
    </location>
</feature>
<gene>
    <name evidence="1" type="primary">ybjQ</name>
    <name type="ordered locus">ECSE_0924</name>
</gene>
<comment type="similarity">
    <text evidence="1">Belongs to the UPF0145 family.</text>
</comment>
<dbReference type="EMBL" id="AP009240">
    <property type="protein sequence ID" value="BAG76448.1"/>
    <property type="molecule type" value="Genomic_DNA"/>
</dbReference>
<dbReference type="RefSeq" id="WP_001160737.1">
    <property type="nucleotide sequence ID" value="NC_011415.1"/>
</dbReference>
<dbReference type="SMR" id="B6I8I6"/>
<dbReference type="KEGG" id="ecy:ECSE_0924"/>
<dbReference type="HOGENOM" id="CLU_117144_3_0_6"/>
<dbReference type="Proteomes" id="UP000008199">
    <property type="component" value="Chromosome"/>
</dbReference>
<dbReference type="Gene3D" id="3.30.110.70">
    <property type="entry name" value="Hypothetical protein apc22750. Chain B"/>
    <property type="match status" value="1"/>
</dbReference>
<dbReference type="HAMAP" id="MF_00338">
    <property type="entry name" value="UPF0145"/>
    <property type="match status" value="1"/>
</dbReference>
<dbReference type="InterPro" id="IPR035439">
    <property type="entry name" value="UPF0145_dom_sf"/>
</dbReference>
<dbReference type="InterPro" id="IPR002765">
    <property type="entry name" value="UPF0145_YbjQ-like"/>
</dbReference>
<dbReference type="NCBIfam" id="NF002776">
    <property type="entry name" value="PRK02877.1"/>
    <property type="match status" value="1"/>
</dbReference>
<dbReference type="PANTHER" id="PTHR34068">
    <property type="entry name" value="UPF0145 PROTEIN YBJQ"/>
    <property type="match status" value="1"/>
</dbReference>
<dbReference type="PANTHER" id="PTHR34068:SF1">
    <property type="entry name" value="UPF0145 PROTEIN YBJQ"/>
    <property type="match status" value="1"/>
</dbReference>
<dbReference type="Pfam" id="PF01906">
    <property type="entry name" value="YbjQ_1"/>
    <property type="match status" value="1"/>
</dbReference>
<dbReference type="SUPFAM" id="SSF117782">
    <property type="entry name" value="YbjQ-like"/>
    <property type="match status" value="1"/>
</dbReference>
<proteinExistence type="inferred from homology"/>
<evidence type="ECO:0000255" key="1">
    <source>
        <dbReference type="HAMAP-Rule" id="MF_00338"/>
    </source>
</evidence>
<sequence length="107" mass="11437">MQFSTTPTLEGQTIVEYCGVVTGEAILGANIFRDFFAGIRDIVGGRSGAYEKELRKAREIAFEELGSQARALGADAVVGIDIDYETVGQNGSMLMVSVSGTAVKTRR</sequence>
<protein>
    <recommendedName>
        <fullName evidence="1">UPF0145 protein YbjQ</fullName>
    </recommendedName>
</protein>
<organism>
    <name type="scientific">Escherichia coli (strain SE11)</name>
    <dbReference type="NCBI Taxonomy" id="409438"/>
    <lineage>
        <taxon>Bacteria</taxon>
        <taxon>Pseudomonadati</taxon>
        <taxon>Pseudomonadota</taxon>
        <taxon>Gammaproteobacteria</taxon>
        <taxon>Enterobacterales</taxon>
        <taxon>Enterobacteriaceae</taxon>
        <taxon>Escherichia</taxon>
    </lineage>
</organism>